<proteinExistence type="inferred from homology"/>
<evidence type="ECO:0000255" key="1">
    <source>
        <dbReference type="HAMAP-Rule" id="MF_00131"/>
    </source>
</evidence>
<reference key="1">
    <citation type="submission" date="2007-03" db="EMBL/GenBank/DDBJ databases">
        <authorList>
            <person name="Heidelberg J."/>
        </authorList>
    </citation>
    <scope>NUCLEOTIDE SEQUENCE [LARGE SCALE GENOMIC DNA]</scope>
    <source>
        <strain>ATCC 39541 / Classical Ogawa 395 / O395</strain>
    </source>
</reference>
<reference key="2">
    <citation type="journal article" date="2008" name="PLoS ONE">
        <title>A recalibrated molecular clock and independent origins for the cholera pandemic clones.</title>
        <authorList>
            <person name="Feng L."/>
            <person name="Reeves P.R."/>
            <person name="Lan R."/>
            <person name="Ren Y."/>
            <person name="Gao C."/>
            <person name="Zhou Z."/>
            <person name="Ren Y."/>
            <person name="Cheng J."/>
            <person name="Wang W."/>
            <person name="Wang J."/>
            <person name="Qian W."/>
            <person name="Li D."/>
            <person name="Wang L."/>
        </authorList>
    </citation>
    <scope>NUCLEOTIDE SEQUENCE [LARGE SCALE GENOMIC DNA]</scope>
    <source>
        <strain>ATCC 39541 / Classical Ogawa 395 / O395</strain>
    </source>
</reference>
<comment type="function">
    <text evidence="1">The alpha subunit is responsible for the aldol cleavage of indoleglycerol phosphate to indole and glyceraldehyde 3-phosphate.</text>
</comment>
<comment type="catalytic activity">
    <reaction evidence="1">
        <text>(1S,2R)-1-C-(indol-3-yl)glycerol 3-phosphate + L-serine = D-glyceraldehyde 3-phosphate + L-tryptophan + H2O</text>
        <dbReference type="Rhea" id="RHEA:10532"/>
        <dbReference type="ChEBI" id="CHEBI:15377"/>
        <dbReference type="ChEBI" id="CHEBI:33384"/>
        <dbReference type="ChEBI" id="CHEBI:57912"/>
        <dbReference type="ChEBI" id="CHEBI:58866"/>
        <dbReference type="ChEBI" id="CHEBI:59776"/>
        <dbReference type="EC" id="4.2.1.20"/>
    </reaction>
</comment>
<comment type="pathway">
    <text evidence="1">Amino-acid biosynthesis; L-tryptophan biosynthesis; L-tryptophan from chorismate: step 5/5.</text>
</comment>
<comment type="subunit">
    <text evidence="1">Tetramer of two alpha and two beta chains.</text>
</comment>
<comment type="similarity">
    <text evidence="1">Belongs to the TrpA family.</text>
</comment>
<keyword id="KW-0028">Amino-acid biosynthesis</keyword>
<keyword id="KW-0057">Aromatic amino acid biosynthesis</keyword>
<keyword id="KW-0456">Lyase</keyword>
<keyword id="KW-0822">Tryptophan biosynthesis</keyword>
<accession>A5F207</accession>
<accession>C3LZT0</accession>
<feature type="chain" id="PRO_1000071426" description="Tryptophan synthase alpha chain">
    <location>
        <begin position="1"/>
        <end position="268"/>
    </location>
</feature>
<feature type="active site" description="Proton acceptor" evidence="1">
    <location>
        <position position="49"/>
    </location>
</feature>
<feature type="active site" description="Proton acceptor" evidence="1">
    <location>
        <position position="60"/>
    </location>
</feature>
<gene>
    <name evidence="1" type="primary">trpA</name>
    <name type="ordered locus">VC0395_A0791</name>
    <name type="ordered locus">VC395_1288</name>
</gene>
<name>TRPA_VIBC3</name>
<sequence>MNRYQALFQRLSAAQQGAFVPFVTIGDPNPEQSLAIMQTLIDAGADALELGMPFSDPLADGPTIQGANLRALAAKTTPDICFELIAQIRARNPETPIGLLMYANLVYARGIDDFYQRCQKAGVDSVLIADVPTNESQPFVAAAEKFGIQPIFIAPPTASDETLRAVAQLGKGYTYLLSRAGVTGAETKANMPVHALLERLQQFDAPPALLGFGISEPAQVKQAIEAGAAGAISGSAVVKIIETHLDNPAKQLTELANFTQAMKKATKI</sequence>
<dbReference type="EC" id="4.2.1.20" evidence="1"/>
<dbReference type="EMBL" id="CP000627">
    <property type="protein sequence ID" value="ABQ20070.1"/>
    <property type="molecule type" value="Genomic_DNA"/>
</dbReference>
<dbReference type="EMBL" id="CP001235">
    <property type="protein sequence ID" value="ACP09296.1"/>
    <property type="molecule type" value="Genomic_DNA"/>
</dbReference>
<dbReference type="RefSeq" id="WP_001083161.1">
    <property type="nucleotide sequence ID" value="NZ_JAACZH010000002.1"/>
</dbReference>
<dbReference type="SMR" id="A5F207"/>
<dbReference type="KEGG" id="vco:VC0395_A0791"/>
<dbReference type="KEGG" id="vcr:VC395_1288"/>
<dbReference type="PATRIC" id="fig|345073.21.peg.1255"/>
<dbReference type="eggNOG" id="COG0159">
    <property type="taxonomic scope" value="Bacteria"/>
</dbReference>
<dbReference type="HOGENOM" id="CLU_016734_0_4_6"/>
<dbReference type="OrthoDB" id="9804578at2"/>
<dbReference type="UniPathway" id="UPA00035">
    <property type="reaction ID" value="UER00044"/>
</dbReference>
<dbReference type="Proteomes" id="UP000000249">
    <property type="component" value="Chromosome 2"/>
</dbReference>
<dbReference type="GO" id="GO:0005829">
    <property type="term" value="C:cytosol"/>
    <property type="evidence" value="ECO:0007669"/>
    <property type="project" value="TreeGrafter"/>
</dbReference>
<dbReference type="GO" id="GO:0004834">
    <property type="term" value="F:tryptophan synthase activity"/>
    <property type="evidence" value="ECO:0007669"/>
    <property type="project" value="UniProtKB-UniRule"/>
</dbReference>
<dbReference type="CDD" id="cd04724">
    <property type="entry name" value="Tryptophan_synthase_alpha"/>
    <property type="match status" value="1"/>
</dbReference>
<dbReference type="FunFam" id="3.20.20.70:FF:000037">
    <property type="entry name" value="Tryptophan synthase alpha chain"/>
    <property type="match status" value="1"/>
</dbReference>
<dbReference type="Gene3D" id="3.20.20.70">
    <property type="entry name" value="Aldolase class I"/>
    <property type="match status" value="1"/>
</dbReference>
<dbReference type="HAMAP" id="MF_00131">
    <property type="entry name" value="Trp_synth_alpha"/>
    <property type="match status" value="1"/>
</dbReference>
<dbReference type="InterPro" id="IPR013785">
    <property type="entry name" value="Aldolase_TIM"/>
</dbReference>
<dbReference type="InterPro" id="IPR011060">
    <property type="entry name" value="RibuloseP-bd_barrel"/>
</dbReference>
<dbReference type="InterPro" id="IPR018204">
    <property type="entry name" value="Trp_synthase_alpha_AS"/>
</dbReference>
<dbReference type="InterPro" id="IPR002028">
    <property type="entry name" value="Trp_synthase_suA"/>
</dbReference>
<dbReference type="NCBIfam" id="TIGR00262">
    <property type="entry name" value="trpA"/>
    <property type="match status" value="1"/>
</dbReference>
<dbReference type="PANTHER" id="PTHR43406:SF1">
    <property type="entry name" value="TRYPTOPHAN SYNTHASE ALPHA CHAIN, CHLOROPLASTIC"/>
    <property type="match status" value="1"/>
</dbReference>
<dbReference type="PANTHER" id="PTHR43406">
    <property type="entry name" value="TRYPTOPHAN SYNTHASE, ALPHA CHAIN"/>
    <property type="match status" value="1"/>
</dbReference>
<dbReference type="Pfam" id="PF00290">
    <property type="entry name" value="Trp_syntA"/>
    <property type="match status" value="1"/>
</dbReference>
<dbReference type="SUPFAM" id="SSF51366">
    <property type="entry name" value="Ribulose-phoshate binding barrel"/>
    <property type="match status" value="1"/>
</dbReference>
<dbReference type="PROSITE" id="PS00167">
    <property type="entry name" value="TRP_SYNTHASE_ALPHA"/>
    <property type="match status" value="1"/>
</dbReference>
<protein>
    <recommendedName>
        <fullName evidence="1">Tryptophan synthase alpha chain</fullName>
        <ecNumber evidence="1">4.2.1.20</ecNumber>
    </recommendedName>
</protein>
<organism>
    <name type="scientific">Vibrio cholerae serotype O1 (strain ATCC 39541 / Classical Ogawa 395 / O395)</name>
    <dbReference type="NCBI Taxonomy" id="345073"/>
    <lineage>
        <taxon>Bacteria</taxon>
        <taxon>Pseudomonadati</taxon>
        <taxon>Pseudomonadota</taxon>
        <taxon>Gammaproteobacteria</taxon>
        <taxon>Vibrionales</taxon>
        <taxon>Vibrionaceae</taxon>
        <taxon>Vibrio</taxon>
    </lineage>
</organism>